<dbReference type="EMBL" id="DQ347958">
    <property type="protein sequence ID" value="ABC56197.1"/>
    <property type="molecule type" value="Genomic_DNA"/>
</dbReference>
<dbReference type="RefSeq" id="YP_538832.1">
    <property type="nucleotide sequence ID" value="NC_007943.1"/>
</dbReference>
<dbReference type="SMR" id="Q2MIK3"/>
<dbReference type="GeneID" id="3989456"/>
<dbReference type="GO" id="GO:0009535">
    <property type="term" value="C:chloroplast thylakoid membrane"/>
    <property type="evidence" value="ECO:0007669"/>
    <property type="project" value="UniProtKB-SubCell"/>
</dbReference>
<dbReference type="GO" id="GO:0009539">
    <property type="term" value="C:photosystem II reaction center"/>
    <property type="evidence" value="ECO:0007669"/>
    <property type="project" value="InterPro"/>
</dbReference>
<dbReference type="GO" id="GO:0015979">
    <property type="term" value="P:photosynthesis"/>
    <property type="evidence" value="ECO:0007669"/>
    <property type="project" value="UniProtKB-UniRule"/>
</dbReference>
<dbReference type="HAMAP" id="MF_01316">
    <property type="entry name" value="PSII_PsbI"/>
    <property type="match status" value="1"/>
</dbReference>
<dbReference type="InterPro" id="IPR003686">
    <property type="entry name" value="PSII_PsbI"/>
</dbReference>
<dbReference type="InterPro" id="IPR037271">
    <property type="entry name" value="PSII_PsbI_sf"/>
</dbReference>
<dbReference type="NCBIfam" id="NF002735">
    <property type="entry name" value="PRK02655.1"/>
    <property type="match status" value="1"/>
</dbReference>
<dbReference type="PANTHER" id="PTHR35772">
    <property type="entry name" value="PHOTOSYSTEM II REACTION CENTER PROTEIN I"/>
    <property type="match status" value="1"/>
</dbReference>
<dbReference type="PANTHER" id="PTHR35772:SF1">
    <property type="entry name" value="PHOTOSYSTEM II REACTION CENTER PROTEIN I"/>
    <property type="match status" value="1"/>
</dbReference>
<dbReference type="Pfam" id="PF02532">
    <property type="entry name" value="PsbI"/>
    <property type="match status" value="1"/>
</dbReference>
<dbReference type="SUPFAM" id="SSF161041">
    <property type="entry name" value="Photosystem II reaction center protein I, PsbI"/>
    <property type="match status" value="1"/>
</dbReference>
<geneLocation type="chloroplast"/>
<protein>
    <recommendedName>
        <fullName evidence="1">Photosystem II reaction center protein I</fullName>
        <shortName evidence="1">PSII-I</shortName>
    </recommendedName>
    <alternativeName>
        <fullName evidence="1">PSII 4.8 kDa protein</fullName>
    </alternativeName>
</protein>
<gene>
    <name evidence="1" type="primary">psbI</name>
</gene>
<reference key="1">
    <citation type="journal article" date="2006" name="Theor. Appl. Genet.">
        <title>Complete chloroplast genome sequences of Solanum bulbocastanum, Solanum lycopersicum and comparative analyses with other Solanaceae genomes.</title>
        <authorList>
            <person name="Daniell H."/>
            <person name="Lee S.-B."/>
            <person name="Grevich J."/>
            <person name="Saski C."/>
            <person name="Quesada-Vargas T."/>
            <person name="Guda C."/>
            <person name="Tomkins J."/>
            <person name="Jansen R.K."/>
        </authorList>
    </citation>
    <scope>NUCLEOTIDE SEQUENCE [LARGE SCALE GENOMIC DNA]</scope>
    <source>
        <strain>cv. PT29</strain>
    </source>
</reference>
<evidence type="ECO:0000255" key="1">
    <source>
        <dbReference type="HAMAP-Rule" id="MF_01316"/>
    </source>
</evidence>
<name>PSBI_SOLBU</name>
<accession>Q2MIK3</accession>
<comment type="function">
    <text evidence="1">One of the components of the core complex of photosystem II (PSII), required for its stability and/or assembly. PSII is a light-driven water:plastoquinone oxidoreductase that uses light energy to abstract electrons from H(2)O, generating O(2) and a proton gradient subsequently used for ATP formation. It consists of a core antenna complex that captures photons, and an electron transfer chain that converts photonic excitation into a charge separation.</text>
</comment>
<comment type="subunit">
    <text evidence="1">PSII is composed of 1 copy each of membrane proteins PsbA, PsbB, PsbC, PsbD, PsbE, PsbF, PsbH, PsbI, PsbJ, PsbK, PsbL, PsbM, PsbT, PsbX, PsbY, PsbZ, Psb30/Ycf12, at least 3 peripheral proteins of the oxygen-evolving complex and a large number of cofactors. It forms dimeric complexes.</text>
</comment>
<comment type="subcellular location">
    <subcellularLocation>
        <location evidence="1">Plastid</location>
        <location evidence="1">Chloroplast thylakoid membrane</location>
        <topology evidence="1">Single-pass membrane protein</topology>
    </subcellularLocation>
</comment>
<comment type="similarity">
    <text evidence="1">Belongs to the PsbI family.</text>
</comment>
<proteinExistence type="inferred from homology"/>
<feature type="chain" id="PRO_0000275809" description="Photosystem II reaction center protein I">
    <location>
        <begin position="1"/>
        <end position="36"/>
    </location>
</feature>
<feature type="transmembrane region" description="Helical" evidence="1">
    <location>
        <begin position="4"/>
        <end position="24"/>
    </location>
</feature>
<keyword id="KW-0150">Chloroplast</keyword>
<keyword id="KW-0472">Membrane</keyword>
<keyword id="KW-0602">Photosynthesis</keyword>
<keyword id="KW-0604">Photosystem II</keyword>
<keyword id="KW-0934">Plastid</keyword>
<keyword id="KW-0674">Reaction center</keyword>
<keyword id="KW-0793">Thylakoid</keyword>
<keyword id="KW-0812">Transmembrane</keyword>
<keyword id="KW-1133">Transmembrane helix</keyword>
<organism>
    <name type="scientific">Solanum bulbocastanum</name>
    <name type="common">Wild potato</name>
    <dbReference type="NCBI Taxonomy" id="147425"/>
    <lineage>
        <taxon>Eukaryota</taxon>
        <taxon>Viridiplantae</taxon>
        <taxon>Streptophyta</taxon>
        <taxon>Embryophyta</taxon>
        <taxon>Tracheophyta</taxon>
        <taxon>Spermatophyta</taxon>
        <taxon>Magnoliopsida</taxon>
        <taxon>eudicotyledons</taxon>
        <taxon>Gunneridae</taxon>
        <taxon>Pentapetalae</taxon>
        <taxon>asterids</taxon>
        <taxon>lamiids</taxon>
        <taxon>Solanales</taxon>
        <taxon>Solanaceae</taxon>
        <taxon>Solanoideae</taxon>
        <taxon>Solaneae</taxon>
        <taxon>Solanum</taxon>
    </lineage>
</organism>
<sequence length="36" mass="4168">MLTLKLFVYTVVIFFVSLFIFGFLSNDPGRNPGREE</sequence>